<name>WLI2A_ARATH</name>
<gene>
    <name evidence="5" type="primary">WLIN2A</name>
    <name evidence="4" type="synonym">WLIM2</name>
    <name evidence="7" type="ordered locus">At2g39900</name>
    <name evidence="8" type="ORF">T28M21.6</name>
</gene>
<organism>
    <name type="scientific">Arabidopsis thaliana</name>
    <name type="common">Mouse-ear cress</name>
    <dbReference type="NCBI Taxonomy" id="3702"/>
    <lineage>
        <taxon>Eukaryota</taxon>
        <taxon>Viridiplantae</taxon>
        <taxon>Streptophyta</taxon>
        <taxon>Embryophyta</taxon>
        <taxon>Tracheophyta</taxon>
        <taxon>Spermatophyta</taxon>
        <taxon>Magnoliopsida</taxon>
        <taxon>eudicotyledons</taxon>
        <taxon>Gunneridae</taxon>
        <taxon>Pentapetalae</taxon>
        <taxon>rosids</taxon>
        <taxon>malvids</taxon>
        <taxon>Brassicales</taxon>
        <taxon>Brassicaceae</taxon>
        <taxon>Camelineae</taxon>
        <taxon>Arabidopsis</taxon>
    </lineage>
</organism>
<reference key="1">
    <citation type="journal article" date="1999" name="Nature">
        <title>Sequence and analysis of chromosome 2 of the plant Arabidopsis thaliana.</title>
        <authorList>
            <person name="Lin X."/>
            <person name="Kaul S."/>
            <person name="Rounsley S.D."/>
            <person name="Shea T.P."/>
            <person name="Benito M.-I."/>
            <person name="Town C.D."/>
            <person name="Fujii C.Y."/>
            <person name="Mason T.M."/>
            <person name="Bowman C.L."/>
            <person name="Barnstead M.E."/>
            <person name="Feldblyum T.V."/>
            <person name="Buell C.R."/>
            <person name="Ketchum K.A."/>
            <person name="Lee J.J."/>
            <person name="Ronning C.M."/>
            <person name="Koo H.L."/>
            <person name="Moffat K.S."/>
            <person name="Cronin L.A."/>
            <person name="Shen M."/>
            <person name="Pai G."/>
            <person name="Van Aken S."/>
            <person name="Umayam L."/>
            <person name="Tallon L.J."/>
            <person name="Gill J.E."/>
            <person name="Adams M.D."/>
            <person name="Carrera A.J."/>
            <person name="Creasy T.H."/>
            <person name="Goodman H.M."/>
            <person name="Somerville C.R."/>
            <person name="Copenhaver G.P."/>
            <person name="Preuss D."/>
            <person name="Nierman W.C."/>
            <person name="White O."/>
            <person name="Eisen J.A."/>
            <person name="Salzberg S.L."/>
            <person name="Fraser C.M."/>
            <person name="Venter J.C."/>
        </authorList>
    </citation>
    <scope>NUCLEOTIDE SEQUENCE [LARGE SCALE GENOMIC DNA]</scope>
    <source>
        <strain>cv. Columbia</strain>
    </source>
</reference>
<reference key="2">
    <citation type="journal article" date="2017" name="Plant J.">
        <title>Araport11: a complete reannotation of the Arabidopsis thaliana reference genome.</title>
        <authorList>
            <person name="Cheng C.Y."/>
            <person name="Krishnakumar V."/>
            <person name="Chan A.P."/>
            <person name="Thibaud-Nissen F."/>
            <person name="Schobel S."/>
            <person name="Town C.D."/>
        </authorList>
    </citation>
    <scope>GENOME REANNOTATION</scope>
    <source>
        <strain>cv. Columbia</strain>
    </source>
</reference>
<reference key="3">
    <citation type="journal article" date="2003" name="Science">
        <title>Empirical analysis of transcriptional activity in the Arabidopsis genome.</title>
        <authorList>
            <person name="Yamada K."/>
            <person name="Lim J."/>
            <person name="Dale J.M."/>
            <person name="Chen H."/>
            <person name="Shinn P."/>
            <person name="Palm C.J."/>
            <person name="Southwick A.M."/>
            <person name="Wu H.C."/>
            <person name="Kim C.J."/>
            <person name="Nguyen M."/>
            <person name="Pham P.K."/>
            <person name="Cheuk R.F."/>
            <person name="Karlin-Newmann G."/>
            <person name="Liu S.X."/>
            <person name="Lam B."/>
            <person name="Sakano H."/>
            <person name="Wu T."/>
            <person name="Yu G."/>
            <person name="Miranda M."/>
            <person name="Quach H.L."/>
            <person name="Tripp M."/>
            <person name="Chang C.H."/>
            <person name="Lee J.M."/>
            <person name="Toriumi M.J."/>
            <person name="Chan M.M."/>
            <person name="Tang C.C."/>
            <person name="Onodera C.S."/>
            <person name="Deng J.M."/>
            <person name="Akiyama K."/>
            <person name="Ansari Y."/>
            <person name="Arakawa T."/>
            <person name="Banh J."/>
            <person name="Banno F."/>
            <person name="Bowser L."/>
            <person name="Brooks S.Y."/>
            <person name="Carninci P."/>
            <person name="Chao Q."/>
            <person name="Choy N."/>
            <person name="Enju A."/>
            <person name="Goldsmith A.D."/>
            <person name="Gurjal M."/>
            <person name="Hansen N.F."/>
            <person name="Hayashizaki Y."/>
            <person name="Johnson-Hopson C."/>
            <person name="Hsuan V.W."/>
            <person name="Iida K."/>
            <person name="Karnes M."/>
            <person name="Khan S."/>
            <person name="Koesema E."/>
            <person name="Ishida J."/>
            <person name="Jiang P.X."/>
            <person name="Jones T."/>
            <person name="Kawai J."/>
            <person name="Kamiya A."/>
            <person name="Meyers C."/>
            <person name="Nakajima M."/>
            <person name="Narusaka M."/>
            <person name="Seki M."/>
            <person name="Sakurai T."/>
            <person name="Satou M."/>
            <person name="Tamse R."/>
            <person name="Vaysberg M."/>
            <person name="Wallender E.K."/>
            <person name="Wong C."/>
            <person name="Yamamura Y."/>
            <person name="Yuan S."/>
            <person name="Shinozaki K."/>
            <person name="Davis R.W."/>
            <person name="Theologis A."/>
            <person name="Ecker J.R."/>
        </authorList>
    </citation>
    <scope>NUCLEOTIDE SEQUENCE [LARGE SCALE MRNA]</scope>
    <source>
        <strain>cv. Columbia</strain>
    </source>
</reference>
<reference key="4">
    <citation type="journal article" date="2000" name="Mol. Gen. Genet.">
        <title>Molecular and expression analysis of a LIM protein gene family from flowering plants.</title>
        <authorList>
            <person name="Eliasson A."/>
            <person name="Gass N."/>
            <person name="Mundel C."/>
            <person name="Baltz R."/>
            <person name="Kraeuter R."/>
            <person name="Evrard J.L."/>
            <person name="Steinmetz A."/>
        </authorList>
    </citation>
    <scope>TISSUE SPECIFICITY</scope>
</reference>
<reference key="5">
    <citation type="journal article" date="2007" name="DNA Res.">
        <title>Genome-wide analysis of LIM gene family in Populus trichocarpa, Arabidopsis thaliana, and Oryza sativa.</title>
        <authorList>
            <person name="Arnaud D."/>
            <person name="Dejardin A."/>
            <person name="Leple J.C."/>
            <person name="Lesage-Descauses M.C."/>
            <person name="Pilate G."/>
        </authorList>
    </citation>
    <scope>GENE FAMILY</scope>
    <scope>NOMENCLATURE</scope>
</reference>
<reference key="6">
    <citation type="journal article" date="2010" name="Plant Cell">
        <title>Arabidopsis LIM proteins: a family of actin bundlers with distinct expression patterns and modes of regulation.</title>
        <authorList>
            <person name="Papuga J."/>
            <person name="Hoffmann C."/>
            <person name="Dieterle M."/>
            <person name="Moes D."/>
            <person name="Moreau F."/>
            <person name="Tholl S."/>
            <person name="Steinmetz A."/>
            <person name="Thomas C."/>
        </authorList>
    </citation>
    <scope>FUNCTION</scope>
    <scope>TISSUE SPECIFICITY</scope>
    <scope>SUBCELLULAR LOCATION</scope>
    <scope>INTERACTION WITH F-ACTIN</scope>
</reference>
<evidence type="ECO:0000255" key="1">
    <source>
        <dbReference type="PROSITE-ProRule" id="PRU00125"/>
    </source>
</evidence>
<evidence type="ECO:0000269" key="2">
    <source>
    </source>
</evidence>
<evidence type="ECO:0000269" key="3">
    <source>
    </source>
</evidence>
<evidence type="ECO:0000303" key="4">
    <source>
    </source>
</evidence>
<evidence type="ECO:0000303" key="5">
    <source>
    </source>
</evidence>
<evidence type="ECO:0000305" key="6"/>
<evidence type="ECO:0000312" key="7">
    <source>
        <dbReference type="Araport" id="AT2G39900"/>
    </source>
</evidence>
<evidence type="ECO:0000312" key="8">
    <source>
        <dbReference type="EMBL" id="AAB95275.1"/>
    </source>
</evidence>
<sequence>MSFTGTQQKCRACEKTVYPVELLSADGISYHKACFKCSHCKSRLQLSNYSSMEGVVYCRPHFEQLFKESGSFSKNFQSPAKPLTDKPTPELNRTPSRLAGMFSGTQDKCATCTKTVYPIEKVTVESQCYHKSCFKCSHGGCPISPSNYAALEGILYCKHHFAQLFKEKGSYNHLIKSASIKRATAAATAAAAAVAAVPES</sequence>
<comment type="function">
    <text evidence="3">Binds to actin filaments and promotes cross-linking into thick bundles. Has an actin-stabilizing activity. The actin regulatory activities are not regulated by pH and [Ca(2+)].</text>
</comment>
<comment type="subunit">
    <text evidence="3">Interacts with F-actin.</text>
</comment>
<comment type="subcellular location">
    <subcellularLocation>
        <location evidence="3">Cytoplasm</location>
        <location evidence="3">Cytoskeleton</location>
    </subcellularLocation>
</comment>
<comment type="tissue specificity">
    <text evidence="2 3">Expressed in roots, leaves, stems, flowers and siliques. Barely detected in pollen.</text>
</comment>
<comment type="miscellaneous">
    <text evidence="3">Cross-links actin with a constant of dissociation of 0.4 uM.</text>
</comment>
<accession>O04193</accession>
<keyword id="KW-0009">Actin-binding</keyword>
<keyword id="KW-0963">Cytoplasm</keyword>
<keyword id="KW-0206">Cytoskeleton</keyword>
<keyword id="KW-0440">LIM domain</keyword>
<keyword id="KW-0479">Metal-binding</keyword>
<keyword id="KW-1185">Reference proteome</keyword>
<keyword id="KW-0677">Repeat</keyword>
<keyword id="KW-0862">Zinc</keyword>
<proteinExistence type="evidence at protein level"/>
<protein>
    <recommendedName>
        <fullName evidence="6">LIM domain-containing protein WLIM2a</fullName>
    </recommendedName>
    <alternativeName>
        <fullName evidence="4">Widely-expressed LIM protein 2</fullName>
        <shortName>AtWLIM2</shortName>
    </alternativeName>
</protein>
<dbReference type="EMBL" id="AF002109">
    <property type="protein sequence ID" value="AAB95275.1"/>
    <property type="molecule type" value="Genomic_DNA"/>
</dbReference>
<dbReference type="EMBL" id="CP002685">
    <property type="protein sequence ID" value="AEC09747.1"/>
    <property type="molecule type" value="Genomic_DNA"/>
</dbReference>
<dbReference type="EMBL" id="AY094448">
    <property type="protein sequence ID" value="AAM19819.1"/>
    <property type="molecule type" value="mRNA"/>
</dbReference>
<dbReference type="EMBL" id="AY122901">
    <property type="protein sequence ID" value="AAM67434.1"/>
    <property type="molecule type" value="mRNA"/>
</dbReference>
<dbReference type="PIR" id="G84822">
    <property type="entry name" value="G84822"/>
</dbReference>
<dbReference type="RefSeq" id="NP_181519.1">
    <property type="nucleotide sequence ID" value="NM_129548.4"/>
</dbReference>
<dbReference type="BioGRID" id="3915">
    <property type="interactions" value="5"/>
</dbReference>
<dbReference type="FunCoup" id="O04193">
    <property type="interactions" value="566"/>
</dbReference>
<dbReference type="IntAct" id="O04193">
    <property type="interactions" value="5"/>
</dbReference>
<dbReference type="STRING" id="3702.O04193"/>
<dbReference type="iPTMnet" id="O04193"/>
<dbReference type="PaxDb" id="3702-AT2G39900.1"/>
<dbReference type="ProteomicsDB" id="242767"/>
<dbReference type="EnsemblPlants" id="AT2G39900.1">
    <property type="protein sequence ID" value="AT2G39900.1"/>
    <property type="gene ID" value="AT2G39900"/>
</dbReference>
<dbReference type="GeneID" id="818577"/>
<dbReference type="Gramene" id="AT2G39900.1">
    <property type="protein sequence ID" value="AT2G39900.1"/>
    <property type="gene ID" value="AT2G39900"/>
</dbReference>
<dbReference type="KEGG" id="ath:AT2G39900"/>
<dbReference type="Araport" id="AT2G39900"/>
<dbReference type="TAIR" id="AT2G39900">
    <property type="gene designation" value="WLIM2A"/>
</dbReference>
<dbReference type="eggNOG" id="KOG1700">
    <property type="taxonomic scope" value="Eukaryota"/>
</dbReference>
<dbReference type="HOGENOM" id="CLU_026811_1_0_1"/>
<dbReference type="InParanoid" id="O04193"/>
<dbReference type="OMA" id="DKDRELY"/>
<dbReference type="OrthoDB" id="6129702at2759"/>
<dbReference type="PhylomeDB" id="O04193"/>
<dbReference type="PRO" id="PR:O04193"/>
<dbReference type="Proteomes" id="UP000006548">
    <property type="component" value="Chromosome 2"/>
</dbReference>
<dbReference type="ExpressionAtlas" id="O04193">
    <property type="expression patterns" value="baseline and differential"/>
</dbReference>
<dbReference type="GO" id="GO:0005737">
    <property type="term" value="C:cytoplasm"/>
    <property type="evidence" value="ECO:0007669"/>
    <property type="project" value="UniProtKB-KW"/>
</dbReference>
<dbReference type="GO" id="GO:0005856">
    <property type="term" value="C:cytoskeleton"/>
    <property type="evidence" value="ECO:0007669"/>
    <property type="project" value="UniProtKB-SubCell"/>
</dbReference>
<dbReference type="GO" id="GO:0051015">
    <property type="term" value="F:actin filament binding"/>
    <property type="evidence" value="ECO:0000314"/>
    <property type="project" value="TAIR"/>
</dbReference>
<dbReference type="GO" id="GO:0046872">
    <property type="term" value="F:metal ion binding"/>
    <property type="evidence" value="ECO:0007669"/>
    <property type="project" value="UniProtKB-KW"/>
</dbReference>
<dbReference type="GO" id="GO:0051017">
    <property type="term" value="P:actin filament bundle assembly"/>
    <property type="evidence" value="ECO:0000314"/>
    <property type="project" value="TAIR"/>
</dbReference>
<dbReference type="CDD" id="cd09440">
    <property type="entry name" value="LIM1_SF3"/>
    <property type="match status" value="1"/>
</dbReference>
<dbReference type="CDD" id="cd09441">
    <property type="entry name" value="LIM2_SF3"/>
    <property type="match status" value="1"/>
</dbReference>
<dbReference type="FunFam" id="2.10.110.10:FF:000002">
    <property type="entry name" value="LIM domain and actin-binding 1"/>
    <property type="match status" value="2"/>
</dbReference>
<dbReference type="Gene3D" id="2.10.110.10">
    <property type="entry name" value="Cysteine Rich Protein"/>
    <property type="match status" value="2"/>
</dbReference>
<dbReference type="InterPro" id="IPR001781">
    <property type="entry name" value="Znf_LIM"/>
</dbReference>
<dbReference type="PANTHER" id="PTHR24206">
    <property type="entry name" value="OS06G0237300 PROTEIN"/>
    <property type="match status" value="1"/>
</dbReference>
<dbReference type="Pfam" id="PF00412">
    <property type="entry name" value="LIM"/>
    <property type="match status" value="2"/>
</dbReference>
<dbReference type="SMART" id="SM00132">
    <property type="entry name" value="LIM"/>
    <property type="match status" value="2"/>
</dbReference>
<dbReference type="SUPFAM" id="SSF57716">
    <property type="entry name" value="Glucocorticoid receptor-like (DNA-binding domain)"/>
    <property type="match status" value="4"/>
</dbReference>
<dbReference type="PROSITE" id="PS00478">
    <property type="entry name" value="LIM_DOMAIN_1"/>
    <property type="match status" value="1"/>
</dbReference>
<dbReference type="PROSITE" id="PS50023">
    <property type="entry name" value="LIM_DOMAIN_2"/>
    <property type="match status" value="2"/>
</dbReference>
<feature type="chain" id="PRO_0000430593" description="LIM domain-containing protein WLIM2a">
    <location>
        <begin position="1"/>
        <end position="200"/>
    </location>
</feature>
<feature type="domain" description="LIM zinc-binding 1" evidence="1">
    <location>
        <begin position="8"/>
        <end position="68"/>
    </location>
</feature>
<feature type="domain" description="LIM zinc-binding 2" evidence="1">
    <location>
        <begin position="107"/>
        <end position="167"/>
    </location>
</feature>